<name>AVO2_YEAST</name>
<sequence>MLKEPSVRLREAIIEGNLLIVKRLLRRNPDLLTNIDSENGWSSLHYASYHGRYLICVYLIQLGHDKHELIKTFKGNTCVHLALMKGHEQTLHLLLQQFPRFINHRGENGRAPIHIACMNDYYQCLSLLIGVGADLWVMDTNGDTPLHVCLEYGSISCMKMLLNEGEVSLDDNVRDKGNWKPIDVAQTFEVGNIYSKVLKEVKKKGPPLGAGKKPSSFRTPILNAKATFEDGPSPVLSMNSPYSLYSNNSPLPVLPRRISTHTTSGNGGNRRSSITNPVFNPRKPTLSTDSFSSSSNSSSRLRVNSINVKTPVGVSPKKELVSESVRHSATPTSPHNNIALINRYLLPNKSNDNVRGDSQTATINDDGGGGNGGDATIGMGLRKDPDDENENKYKIKVNNGEPRRRVSLLNIPISKLRNSNNTRAED</sequence>
<keyword id="KW-0002">3D-structure</keyword>
<keyword id="KW-0040">ANK repeat</keyword>
<keyword id="KW-1003">Cell membrane</keyword>
<keyword id="KW-0472">Membrane</keyword>
<keyword id="KW-0597">Phosphoprotein</keyword>
<keyword id="KW-1185">Reference proteome</keyword>
<keyword id="KW-0677">Repeat</keyword>
<keyword id="KW-0926">Vacuole</keyword>
<accession>Q04749</accession>
<accession>D6VZP2</accession>
<reference key="1">
    <citation type="journal article" date="1997" name="Nature">
        <title>The nucleotide sequence of Saccharomyces cerevisiae chromosome XIII.</title>
        <authorList>
            <person name="Bowman S."/>
            <person name="Churcher C.M."/>
            <person name="Badcock K."/>
            <person name="Brown D."/>
            <person name="Chillingworth T."/>
            <person name="Connor R."/>
            <person name="Dedman K."/>
            <person name="Devlin K."/>
            <person name="Gentles S."/>
            <person name="Hamlin N."/>
            <person name="Hunt S."/>
            <person name="Jagels K."/>
            <person name="Lye G."/>
            <person name="Moule S."/>
            <person name="Odell C."/>
            <person name="Pearson D."/>
            <person name="Rajandream M.A."/>
            <person name="Rice P."/>
            <person name="Skelton J."/>
            <person name="Walsh S.V."/>
            <person name="Whitehead S."/>
            <person name="Barrell B.G."/>
        </authorList>
    </citation>
    <scope>NUCLEOTIDE SEQUENCE [LARGE SCALE GENOMIC DNA]</scope>
    <source>
        <strain>ATCC 204508 / S288c</strain>
    </source>
</reference>
<reference key="2">
    <citation type="journal article" date="2014" name="G3 (Bethesda)">
        <title>The reference genome sequence of Saccharomyces cerevisiae: Then and now.</title>
        <authorList>
            <person name="Engel S.R."/>
            <person name="Dietrich F.S."/>
            <person name="Fisk D.G."/>
            <person name="Binkley G."/>
            <person name="Balakrishnan R."/>
            <person name="Costanzo M.C."/>
            <person name="Dwight S.S."/>
            <person name="Hitz B.C."/>
            <person name="Karra K."/>
            <person name="Nash R.S."/>
            <person name="Weng S."/>
            <person name="Wong E.D."/>
            <person name="Lloyd P."/>
            <person name="Skrzypek M.S."/>
            <person name="Miyasato S.R."/>
            <person name="Simison M."/>
            <person name="Cherry J.M."/>
        </authorList>
    </citation>
    <scope>GENOME REANNOTATION</scope>
    <source>
        <strain>ATCC 204508 / S288c</strain>
    </source>
</reference>
<reference key="3">
    <citation type="journal article" date="2002" name="Mol. Cell">
        <title>Two TOR complexes, only one of which is rapamycin sensitive, have distinct roles in cell growth control.</title>
        <authorList>
            <person name="Loewith R."/>
            <person name="Jacinto E."/>
            <person name="Wullschleger S."/>
            <person name="Lorberg A."/>
            <person name="Crespo J.L."/>
            <person name="Bonenfant D."/>
            <person name="Oppliger W."/>
            <person name="Jenoe P."/>
            <person name="Hall M.N."/>
        </authorList>
    </citation>
    <scope>FUNCTION</scope>
    <scope>IDENTIFICATION IN TORC2</scope>
    <scope>IDENTIFICATION BY MASS SPECTROMETRY</scope>
</reference>
<reference key="4">
    <citation type="journal article" date="2003" name="Mol. Biol. Cell">
        <title>Tor kinases are in distinct membrane-associated protein complexes in Saccharomyces cerevisiae.</title>
        <authorList>
            <person name="Wedaman K.P."/>
            <person name="Reinke A."/>
            <person name="Anderson S."/>
            <person name="Yates J.R. III"/>
            <person name="McCaffery J.M."/>
            <person name="Powers T."/>
        </authorList>
    </citation>
    <scope>SUBCELLULAR LOCATION</scope>
    <scope>IDENTIFICATION IN TORC2</scope>
    <scope>IDENTIFICATION BY MASS SPECTROMETRY</scope>
</reference>
<reference key="5">
    <citation type="journal article" date="2003" name="Nature">
        <title>Global analysis of protein expression in yeast.</title>
        <authorList>
            <person name="Ghaemmaghami S."/>
            <person name="Huh W.-K."/>
            <person name="Bower K."/>
            <person name="Howson R.W."/>
            <person name="Belle A."/>
            <person name="Dephoure N."/>
            <person name="O'Shea E.K."/>
            <person name="Weissman J.S."/>
        </authorList>
    </citation>
    <scope>LEVEL OF PROTEIN EXPRESSION [LARGE SCALE ANALYSIS]</scope>
</reference>
<reference key="6">
    <citation type="journal article" date="2005" name="Mol. Biol. Cell">
        <title>The pleckstrin homology domain proteins Slm1 and Slm2 are required for actin cytoskeleton organization in yeast and bind phosphatidylinositol-4,5-bisphosphate and TORC2.</title>
        <authorList>
            <person name="Fadri M."/>
            <person name="Daquinag A."/>
            <person name="Wang S."/>
            <person name="Xue T."/>
            <person name="Kunz J."/>
        </authorList>
    </citation>
    <scope>INTERACTION WITH SLM1 AND SLM2</scope>
</reference>
<reference key="7">
    <citation type="journal article" date="2005" name="J. Biol. Chem.">
        <title>Molecular organization of target of rapamycin complex 2.</title>
        <authorList>
            <person name="Wullschleger S."/>
            <person name="Loewith R."/>
            <person name="Oppliger W."/>
            <person name="Hall M.N."/>
        </authorList>
    </citation>
    <scope>SUBUNIT</scope>
</reference>
<reference key="8">
    <citation type="journal article" date="2007" name="J. Proteome Res.">
        <title>Large-scale phosphorylation analysis of alpha-factor-arrested Saccharomyces cerevisiae.</title>
        <authorList>
            <person name="Li X."/>
            <person name="Gerber S.A."/>
            <person name="Rudner A.D."/>
            <person name="Beausoleil S.A."/>
            <person name="Haas W."/>
            <person name="Villen J."/>
            <person name="Elias J.E."/>
            <person name="Gygi S.P."/>
        </authorList>
    </citation>
    <scope>IDENTIFICATION BY MASS SPECTROMETRY [LARGE SCALE ANALYSIS]</scope>
    <source>
        <strain>ADR376</strain>
    </source>
</reference>
<reference key="9">
    <citation type="journal article" date="2008" name="Mol. Cell. Proteomics">
        <title>A multidimensional chromatography technology for in-depth phosphoproteome analysis.</title>
        <authorList>
            <person name="Albuquerque C.P."/>
            <person name="Smolka M.B."/>
            <person name="Payne S.H."/>
            <person name="Bafna V."/>
            <person name="Eng J."/>
            <person name="Zhou H."/>
        </authorList>
    </citation>
    <scope>PHOSPHORYLATION [LARGE SCALE ANALYSIS] AT SER-350</scope>
    <scope>IDENTIFICATION BY MASS SPECTROMETRY [LARGE SCALE ANALYSIS]</scope>
</reference>
<reference key="10">
    <citation type="journal article" date="2009" name="Science">
        <title>Global analysis of Cdk1 substrate phosphorylation sites provides insights into evolution.</title>
        <authorList>
            <person name="Holt L.J."/>
            <person name="Tuch B.B."/>
            <person name="Villen J."/>
            <person name="Johnson A.D."/>
            <person name="Gygi S.P."/>
            <person name="Morgan D.O."/>
        </authorList>
    </citation>
    <scope>PHOSPHORYLATION [LARGE SCALE ANALYSIS] AT SER-315</scope>
    <scope>IDENTIFICATION BY MASS SPECTROMETRY [LARGE SCALE ANALYSIS]</scope>
</reference>
<reference evidence="7" key="11">
    <citation type="journal article" date="2017" name="Nat. Commun.">
        <title>Cryo-EM structure of Saccharomyces cerevisiae target of rapamycin complex 2.</title>
        <authorList>
            <person name="Karuppasamy M."/>
            <person name="Kusmider B."/>
            <person name="Oliveira T.M."/>
            <person name="Gaubitz C."/>
            <person name="Prouteau M."/>
            <person name="Loewith R."/>
            <person name="Schaffitzel C."/>
        </authorList>
    </citation>
    <scope>STRUCTURE BY ELECTRON MICROSCOPY (7.90 ANGSTROMS) OF THE TORC2 COMPLEX</scope>
    <scope>IDENTIFICATION IN THE TORC2 COMPLEX</scope>
</reference>
<gene>
    <name type="primary">AVO2</name>
    <name type="ordered locus">YMR068W</name>
    <name type="ORF">YM9916.07</name>
</gene>
<feature type="chain" id="PRO_0000067247" description="Target of rapamycin complex 2 subunit AVO2">
    <location>
        <begin position="1"/>
        <end position="426"/>
    </location>
</feature>
<feature type="repeat" description="ANK 1">
    <location>
        <begin position="4"/>
        <end position="33"/>
    </location>
</feature>
<feature type="repeat" description="ANK 2">
    <location>
        <begin position="39"/>
        <end position="68"/>
    </location>
</feature>
<feature type="repeat" description="ANK 3">
    <location>
        <begin position="74"/>
        <end position="104"/>
    </location>
</feature>
<feature type="repeat" description="ANK 4">
    <location>
        <begin position="108"/>
        <end position="137"/>
    </location>
</feature>
<feature type="repeat" description="ANK 5">
    <location>
        <begin position="141"/>
        <end position="171"/>
    </location>
</feature>
<feature type="region of interest" description="Disordered" evidence="1">
    <location>
        <begin position="259"/>
        <end position="302"/>
    </location>
</feature>
<feature type="region of interest" description="Disordered" evidence="1">
    <location>
        <begin position="350"/>
        <end position="392"/>
    </location>
</feature>
<feature type="compositionally biased region" description="Polar residues" evidence="1">
    <location>
        <begin position="260"/>
        <end position="278"/>
    </location>
</feature>
<feature type="compositionally biased region" description="Low complexity" evidence="1">
    <location>
        <begin position="285"/>
        <end position="302"/>
    </location>
</feature>
<feature type="compositionally biased region" description="Polar residues" evidence="1">
    <location>
        <begin position="350"/>
        <end position="359"/>
    </location>
</feature>
<feature type="compositionally biased region" description="Gly residues" evidence="1">
    <location>
        <begin position="366"/>
        <end position="375"/>
    </location>
</feature>
<feature type="compositionally biased region" description="Basic and acidic residues" evidence="1">
    <location>
        <begin position="381"/>
        <end position="392"/>
    </location>
</feature>
<feature type="modified residue" description="Phosphoserine" evidence="9">
    <location>
        <position position="315"/>
    </location>
</feature>
<feature type="modified residue" description="Phosphoserine" evidence="8">
    <location>
        <position position="350"/>
    </location>
</feature>
<comment type="function">
    <text evidence="2">Component of TORC2, which regulates cell cycle-dependent polarization of the actin-cytoskeleton and cell wall integrity. TORC2 controls polarity of the actin cytoskeleton, which is required for orienting the secretory pathway toward discrete growth sites, via the RHO1/PKC1/MAPK cell integrity pathway.</text>
</comment>
<comment type="subunit">
    <text evidence="2 3 5 6">The target of rapamycin complex 2 (TORC2) is composed of at least AVO1, AVO2, BIT61, LST8, TOR2 and TSC11 (PubMed:12408816, PubMed:12631735, PubMed:16002396, PubMed:29170376). TORC2 forms a homodimer (PubMed:12408816, PubMed:12631735, PubMed:16002396, PubMed:29170376). Contrary to TORC1, TORC2 does not bind to and is not sensitive to FKBP-rapamycin (PubMed:12408816, PubMed:12631735, PubMed:16002396, PubMed:29170376). AVO2 is peripherally associated to AVO1 and TSC11 (PubMed:12408816, PubMed:12631735, PubMed:16002396, PubMed:29170376).</text>
</comment>
<comment type="interaction">
    <interactant intactId="EBI-28131">
        <id>Q04749</id>
    </interactant>
    <interactant intactId="EBI-28598">
        <id>P41318</id>
        <label>LST8</label>
    </interactant>
    <organismsDiffer>false</organismsDiffer>
    <experiments>2</experiments>
</comment>
<comment type="interaction">
    <interactant intactId="EBI-28131">
        <id>Q04749</id>
    </interactant>
    <interactant intactId="EBI-19385">
        <id>P32600</id>
        <label>TOR2</label>
    </interactant>
    <organismsDiffer>false</organismsDiffer>
    <experiments>4</experiments>
</comment>
<comment type="subcellular location">
    <subcellularLocation>
        <location evidence="3">Cell membrane</location>
        <topology evidence="3">Peripheral membrane protein</topology>
        <orientation evidence="3">Cytoplasmic side</orientation>
    </subcellularLocation>
    <subcellularLocation>
        <location evidence="3">Vacuole membrane</location>
        <topology evidence="3">Peripheral membrane protein</topology>
        <orientation evidence="3">Cytoplasmic side</orientation>
    </subcellularLocation>
</comment>
<comment type="miscellaneous">
    <text evidence="4">Present with 1180 molecules/cell in log phase SD medium.</text>
</comment>
<dbReference type="EMBL" id="Z48952">
    <property type="protein sequence ID" value="CAA88793.1"/>
    <property type="molecule type" value="Genomic_DNA"/>
</dbReference>
<dbReference type="EMBL" id="BK006946">
    <property type="protein sequence ID" value="DAA09966.1"/>
    <property type="molecule type" value="Genomic_DNA"/>
</dbReference>
<dbReference type="PIR" id="S52828">
    <property type="entry name" value="S52828"/>
</dbReference>
<dbReference type="RefSeq" id="NP_013784.1">
    <property type="nucleotide sequence ID" value="NM_001182566.1"/>
</dbReference>
<dbReference type="PDB" id="6EMK">
    <property type="method" value="EM"/>
    <property type="resolution" value="8.00 A"/>
    <property type="chains" value="G/H=1-426"/>
</dbReference>
<dbReference type="PDBsum" id="6EMK"/>
<dbReference type="EMDB" id="EMD-3896"/>
<dbReference type="SMR" id="Q04749"/>
<dbReference type="BioGRID" id="35243">
    <property type="interactions" value="95"/>
</dbReference>
<dbReference type="ComplexPortal" id="CPX-1717">
    <property type="entry name" value="TORC2 complex"/>
</dbReference>
<dbReference type="DIP" id="DIP-1958N"/>
<dbReference type="FunCoup" id="Q04749">
    <property type="interactions" value="65"/>
</dbReference>
<dbReference type="IntAct" id="Q04749">
    <property type="interactions" value="8"/>
</dbReference>
<dbReference type="MINT" id="Q04749"/>
<dbReference type="STRING" id="4932.YMR068W"/>
<dbReference type="iPTMnet" id="Q04749"/>
<dbReference type="PaxDb" id="4932-YMR068W"/>
<dbReference type="PeptideAtlas" id="Q04749"/>
<dbReference type="EnsemblFungi" id="YMR068W_mRNA">
    <property type="protein sequence ID" value="YMR068W"/>
    <property type="gene ID" value="YMR068W"/>
</dbReference>
<dbReference type="GeneID" id="855090"/>
<dbReference type="KEGG" id="sce:YMR068W"/>
<dbReference type="AGR" id="SGD:S000004672"/>
<dbReference type="SGD" id="S000004672">
    <property type="gene designation" value="AVO2"/>
</dbReference>
<dbReference type="VEuPathDB" id="FungiDB:YMR068W"/>
<dbReference type="eggNOG" id="KOG0504">
    <property type="taxonomic scope" value="Eukaryota"/>
</dbReference>
<dbReference type="HOGENOM" id="CLU_036011_0_0_1"/>
<dbReference type="InParanoid" id="Q04749"/>
<dbReference type="OMA" id="HIACMND"/>
<dbReference type="OrthoDB" id="823504at2759"/>
<dbReference type="BioCyc" id="YEAST:G3O-32770-MONOMER"/>
<dbReference type="BioGRID-ORCS" id="855090">
    <property type="hits" value="3 hits in 10 CRISPR screens"/>
</dbReference>
<dbReference type="PRO" id="PR:Q04749"/>
<dbReference type="Proteomes" id="UP000002311">
    <property type="component" value="Chromosome XIII"/>
</dbReference>
<dbReference type="RNAct" id="Q04749">
    <property type="molecule type" value="protein"/>
</dbReference>
<dbReference type="GO" id="GO:0005737">
    <property type="term" value="C:cytoplasm"/>
    <property type="evidence" value="ECO:0007005"/>
    <property type="project" value="SGD"/>
</dbReference>
<dbReference type="GO" id="GO:0005829">
    <property type="term" value="C:cytosol"/>
    <property type="evidence" value="ECO:0007005"/>
    <property type="project" value="SGD"/>
</dbReference>
<dbReference type="GO" id="GO:0005634">
    <property type="term" value="C:nucleus"/>
    <property type="evidence" value="ECO:0007005"/>
    <property type="project" value="SGD"/>
</dbReference>
<dbReference type="GO" id="GO:0005886">
    <property type="term" value="C:plasma membrane"/>
    <property type="evidence" value="ECO:0000314"/>
    <property type="project" value="SGD"/>
</dbReference>
<dbReference type="GO" id="GO:0031932">
    <property type="term" value="C:TORC2 complex"/>
    <property type="evidence" value="ECO:0000314"/>
    <property type="project" value="UniProtKB"/>
</dbReference>
<dbReference type="GO" id="GO:0005774">
    <property type="term" value="C:vacuolar membrane"/>
    <property type="evidence" value="ECO:0007669"/>
    <property type="project" value="UniProtKB-SubCell"/>
</dbReference>
<dbReference type="GO" id="GO:0030950">
    <property type="term" value="P:establishment or maintenance of actin cytoskeleton polarity"/>
    <property type="evidence" value="ECO:0000353"/>
    <property type="project" value="SGD"/>
</dbReference>
<dbReference type="GO" id="GO:0001558">
    <property type="term" value="P:regulation of cell growth"/>
    <property type="evidence" value="ECO:0000353"/>
    <property type="project" value="SGD"/>
</dbReference>
<dbReference type="GO" id="GO:0031929">
    <property type="term" value="P:TOR signaling"/>
    <property type="evidence" value="ECO:0000303"/>
    <property type="project" value="ComplexPortal"/>
</dbReference>
<dbReference type="FunFam" id="1.25.40.20:FF:000386">
    <property type="entry name" value="Avo2p"/>
    <property type="match status" value="1"/>
</dbReference>
<dbReference type="Gene3D" id="1.25.40.20">
    <property type="entry name" value="Ankyrin repeat-containing domain"/>
    <property type="match status" value="1"/>
</dbReference>
<dbReference type="InterPro" id="IPR002110">
    <property type="entry name" value="Ankyrin_rpt"/>
</dbReference>
<dbReference type="InterPro" id="IPR036770">
    <property type="entry name" value="Ankyrin_rpt-contain_sf"/>
</dbReference>
<dbReference type="PANTHER" id="PTHR24198">
    <property type="entry name" value="ANKYRIN REPEAT AND PROTEIN KINASE DOMAIN-CONTAINING PROTEIN"/>
    <property type="match status" value="1"/>
</dbReference>
<dbReference type="PANTHER" id="PTHR24198:SF165">
    <property type="entry name" value="ANKYRIN REPEAT-CONTAINING PROTEIN-RELATED"/>
    <property type="match status" value="1"/>
</dbReference>
<dbReference type="Pfam" id="PF12796">
    <property type="entry name" value="Ank_2"/>
    <property type="match status" value="1"/>
</dbReference>
<dbReference type="Pfam" id="PF13637">
    <property type="entry name" value="Ank_4"/>
    <property type="match status" value="1"/>
</dbReference>
<dbReference type="SMART" id="SM00248">
    <property type="entry name" value="ANK"/>
    <property type="match status" value="4"/>
</dbReference>
<dbReference type="SUPFAM" id="SSF48403">
    <property type="entry name" value="Ankyrin repeat"/>
    <property type="match status" value="1"/>
</dbReference>
<dbReference type="PROSITE" id="PS50297">
    <property type="entry name" value="ANK_REP_REGION"/>
    <property type="match status" value="1"/>
</dbReference>
<dbReference type="PROSITE" id="PS50088">
    <property type="entry name" value="ANK_REPEAT"/>
    <property type="match status" value="2"/>
</dbReference>
<protein>
    <recommendedName>
        <fullName>Target of rapamycin complex 2 subunit AVO2</fullName>
        <shortName>TORC2 subunit AVO2</shortName>
    </recommendedName>
    <alternativeName>
        <fullName>Adheres voraciously to TOR2 protein 2</fullName>
    </alternativeName>
</protein>
<organism>
    <name type="scientific">Saccharomyces cerevisiae (strain ATCC 204508 / S288c)</name>
    <name type="common">Baker's yeast</name>
    <dbReference type="NCBI Taxonomy" id="559292"/>
    <lineage>
        <taxon>Eukaryota</taxon>
        <taxon>Fungi</taxon>
        <taxon>Dikarya</taxon>
        <taxon>Ascomycota</taxon>
        <taxon>Saccharomycotina</taxon>
        <taxon>Saccharomycetes</taxon>
        <taxon>Saccharomycetales</taxon>
        <taxon>Saccharomycetaceae</taxon>
        <taxon>Saccharomyces</taxon>
    </lineage>
</organism>
<proteinExistence type="evidence at protein level"/>
<evidence type="ECO:0000256" key="1">
    <source>
        <dbReference type="SAM" id="MobiDB-lite"/>
    </source>
</evidence>
<evidence type="ECO:0000269" key="2">
    <source>
    </source>
</evidence>
<evidence type="ECO:0000269" key="3">
    <source>
    </source>
</evidence>
<evidence type="ECO:0000269" key="4">
    <source>
    </source>
</evidence>
<evidence type="ECO:0000269" key="5">
    <source>
    </source>
</evidence>
<evidence type="ECO:0000269" key="6">
    <source>
    </source>
</evidence>
<evidence type="ECO:0007744" key="7">
    <source>
        <dbReference type="PDB" id="6EMK"/>
    </source>
</evidence>
<evidence type="ECO:0007744" key="8">
    <source>
    </source>
</evidence>
<evidence type="ECO:0007744" key="9">
    <source>
    </source>
</evidence>